<accession>C1L0D5</accession>
<sequence>MGNSVMEKIKGGLVVSCQALEDEPLHSAFIMSKMALAAVQGGAVGIRANTAKDIRAIQSEIDVPIIGIYKKDYDDSDVFITPTLKEVREICETGVEIVAMDATTRKRPHNEDLKDILNAIRKEFPNTLFMADTGSIEDVYYADSLGFDLIGTTLYGYTEETANKNISDDDFSHLKEVLKSTKRPVIAEGKIDSPSKARQVLTLGCYAVVVGGAVTRPQEITTRFTNEIKKI</sequence>
<name>NANE_LISMC</name>
<organism>
    <name type="scientific">Listeria monocytogenes serotype 4b (strain CLIP80459)</name>
    <dbReference type="NCBI Taxonomy" id="568819"/>
    <lineage>
        <taxon>Bacteria</taxon>
        <taxon>Bacillati</taxon>
        <taxon>Bacillota</taxon>
        <taxon>Bacilli</taxon>
        <taxon>Bacillales</taxon>
        <taxon>Listeriaceae</taxon>
        <taxon>Listeria</taxon>
    </lineage>
</organism>
<reference key="1">
    <citation type="journal article" date="2012" name="BMC Genomics">
        <title>Comparative genomics and transcriptomics of lineages I, II, and III strains of Listeria monocytogenes.</title>
        <authorList>
            <person name="Hain T."/>
            <person name="Ghai R."/>
            <person name="Billion A."/>
            <person name="Kuenne C.T."/>
            <person name="Steinweg C."/>
            <person name="Izar B."/>
            <person name="Mohamed W."/>
            <person name="Mraheil M."/>
            <person name="Domann E."/>
            <person name="Schaffrath S."/>
            <person name="Karst U."/>
            <person name="Goesmann A."/>
            <person name="Oehm S."/>
            <person name="Puhler A."/>
            <person name="Merkl R."/>
            <person name="Vorwerk S."/>
            <person name="Glaser P."/>
            <person name="Garrido P."/>
            <person name="Rusniok C."/>
            <person name="Buchrieser C."/>
            <person name="Goebel W."/>
            <person name="Chakraborty T."/>
        </authorList>
    </citation>
    <scope>NUCLEOTIDE SEQUENCE [LARGE SCALE GENOMIC DNA]</scope>
    <source>
        <strain>CLIP80459</strain>
    </source>
</reference>
<gene>
    <name evidence="1" type="primary">nanE</name>
    <name type="ordered locus">Lm4b_02774</name>
</gene>
<proteinExistence type="inferred from homology"/>
<protein>
    <recommendedName>
        <fullName evidence="1">Putative N-acetylmannosamine-6-phosphate 2-epimerase</fullName>
        <ecNumber evidence="1">5.1.3.9</ecNumber>
    </recommendedName>
    <alternativeName>
        <fullName evidence="1">ManNAc-6-P epimerase</fullName>
    </alternativeName>
</protein>
<comment type="function">
    <text evidence="1">Converts N-acetylmannosamine-6-phosphate (ManNAc-6-P) to N-acetylglucosamine-6-phosphate (GlcNAc-6-P).</text>
</comment>
<comment type="catalytic activity">
    <reaction evidence="1">
        <text>an N-acyl-D-glucosamine 6-phosphate = an N-acyl-D-mannosamine 6-phosphate</text>
        <dbReference type="Rhea" id="RHEA:23932"/>
        <dbReference type="ChEBI" id="CHEBI:57599"/>
        <dbReference type="ChEBI" id="CHEBI:57666"/>
        <dbReference type="EC" id="5.1.3.9"/>
    </reaction>
</comment>
<comment type="pathway">
    <text evidence="1">Amino-sugar metabolism; N-acetylneuraminate degradation; D-fructose 6-phosphate from N-acetylneuraminate: step 3/5.</text>
</comment>
<comment type="similarity">
    <text evidence="1">Belongs to the NanE family.</text>
</comment>
<evidence type="ECO:0000255" key="1">
    <source>
        <dbReference type="HAMAP-Rule" id="MF_01235"/>
    </source>
</evidence>
<dbReference type="EC" id="5.1.3.9" evidence="1"/>
<dbReference type="EMBL" id="FM242711">
    <property type="protein sequence ID" value="CAS06528.1"/>
    <property type="molecule type" value="Genomic_DNA"/>
</dbReference>
<dbReference type="RefSeq" id="WP_012681482.1">
    <property type="nucleotide sequence ID" value="NC_012488.1"/>
</dbReference>
<dbReference type="SMR" id="C1L0D5"/>
<dbReference type="KEGG" id="lmc:Lm4b_02774"/>
<dbReference type="HOGENOM" id="CLU_086300_1_0_9"/>
<dbReference type="UniPathway" id="UPA00629">
    <property type="reaction ID" value="UER00682"/>
</dbReference>
<dbReference type="GO" id="GO:0005829">
    <property type="term" value="C:cytosol"/>
    <property type="evidence" value="ECO:0007669"/>
    <property type="project" value="TreeGrafter"/>
</dbReference>
<dbReference type="GO" id="GO:0047465">
    <property type="term" value="F:N-acylglucosamine-6-phosphate 2-epimerase activity"/>
    <property type="evidence" value="ECO:0007669"/>
    <property type="project" value="UniProtKB-EC"/>
</dbReference>
<dbReference type="GO" id="GO:0005975">
    <property type="term" value="P:carbohydrate metabolic process"/>
    <property type="evidence" value="ECO:0007669"/>
    <property type="project" value="UniProtKB-UniRule"/>
</dbReference>
<dbReference type="GO" id="GO:0006053">
    <property type="term" value="P:N-acetylmannosamine catabolic process"/>
    <property type="evidence" value="ECO:0007669"/>
    <property type="project" value="TreeGrafter"/>
</dbReference>
<dbReference type="GO" id="GO:0019262">
    <property type="term" value="P:N-acetylneuraminate catabolic process"/>
    <property type="evidence" value="ECO:0007669"/>
    <property type="project" value="UniProtKB-UniRule"/>
</dbReference>
<dbReference type="CDD" id="cd04729">
    <property type="entry name" value="NanE"/>
    <property type="match status" value="1"/>
</dbReference>
<dbReference type="FunFam" id="3.20.20.70:FF:000035">
    <property type="entry name" value="Putative N-acetylmannosamine-6-phosphate 2-epimerase"/>
    <property type="match status" value="1"/>
</dbReference>
<dbReference type="Gene3D" id="3.20.20.70">
    <property type="entry name" value="Aldolase class I"/>
    <property type="match status" value="1"/>
</dbReference>
<dbReference type="HAMAP" id="MF_01235">
    <property type="entry name" value="ManNAc6P_epimer"/>
    <property type="match status" value="1"/>
</dbReference>
<dbReference type="InterPro" id="IPR013785">
    <property type="entry name" value="Aldolase_TIM"/>
</dbReference>
<dbReference type="InterPro" id="IPR007260">
    <property type="entry name" value="NanE"/>
</dbReference>
<dbReference type="InterPro" id="IPR011060">
    <property type="entry name" value="RibuloseP-bd_barrel"/>
</dbReference>
<dbReference type="NCBIfam" id="NF002231">
    <property type="entry name" value="PRK01130.1"/>
    <property type="match status" value="1"/>
</dbReference>
<dbReference type="PANTHER" id="PTHR36204">
    <property type="entry name" value="N-ACETYLMANNOSAMINE-6-PHOSPHATE 2-EPIMERASE-RELATED"/>
    <property type="match status" value="1"/>
</dbReference>
<dbReference type="PANTHER" id="PTHR36204:SF1">
    <property type="entry name" value="N-ACETYLMANNOSAMINE-6-PHOSPHATE 2-EPIMERASE-RELATED"/>
    <property type="match status" value="1"/>
</dbReference>
<dbReference type="Pfam" id="PF04131">
    <property type="entry name" value="NanE"/>
    <property type="match status" value="1"/>
</dbReference>
<dbReference type="SUPFAM" id="SSF51366">
    <property type="entry name" value="Ribulose-phoshate binding barrel"/>
    <property type="match status" value="1"/>
</dbReference>
<keyword id="KW-0119">Carbohydrate metabolism</keyword>
<keyword id="KW-0413">Isomerase</keyword>
<feature type="chain" id="PRO_1000214035" description="Putative N-acetylmannosamine-6-phosphate 2-epimerase">
    <location>
        <begin position="1"/>
        <end position="231"/>
    </location>
</feature>